<keyword id="KW-0963">Cytoplasm</keyword>
<keyword id="KW-0520">NAD</keyword>
<keyword id="KW-0560">Oxidoreductase</keyword>
<keyword id="KW-0597">Phosphoprotein</keyword>
<dbReference type="EC" id="1.1.1.27" evidence="1 2"/>
<dbReference type="EMBL" id="X70927">
    <property type="protein sequence ID" value="CAA50278.1"/>
    <property type="molecule type" value="Genomic_DNA"/>
</dbReference>
<dbReference type="SMR" id="Q59645"/>
<dbReference type="STRING" id="1254.A4V11_05190"/>
<dbReference type="UniPathway" id="UPA00554">
    <property type="reaction ID" value="UER00611"/>
</dbReference>
<dbReference type="GO" id="GO:0005737">
    <property type="term" value="C:cytoplasm"/>
    <property type="evidence" value="ECO:0007669"/>
    <property type="project" value="UniProtKB-SubCell"/>
</dbReference>
<dbReference type="GO" id="GO:0004459">
    <property type="term" value="F:L-lactate dehydrogenase activity"/>
    <property type="evidence" value="ECO:0007669"/>
    <property type="project" value="UniProtKB-UniRule"/>
</dbReference>
<dbReference type="GO" id="GO:0006096">
    <property type="term" value="P:glycolytic process"/>
    <property type="evidence" value="ECO:0007669"/>
    <property type="project" value="UniProtKB-UniRule"/>
</dbReference>
<dbReference type="GO" id="GO:0006089">
    <property type="term" value="P:lactate metabolic process"/>
    <property type="evidence" value="ECO:0007669"/>
    <property type="project" value="TreeGrafter"/>
</dbReference>
<dbReference type="CDD" id="cd05291">
    <property type="entry name" value="HicDH_like"/>
    <property type="match status" value="1"/>
</dbReference>
<dbReference type="FunFam" id="3.40.50.720:FF:000018">
    <property type="entry name" value="Malate dehydrogenase"/>
    <property type="match status" value="1"/>
</dbReference>
<dbReference type="Gene3D" id="3.90.110.10">
    <property type="entry name" value="Lactate dehydrogenase/glycoside hydrolase, family 4, C-terminal"/>
    <property type="match status" value="1"/>
</dbReference>
<dbReference type="Gene3D" id="3.40.50.720">
    <property type="entry name" value="NAD(P)-binding Rossmann-like Domain"/>
    <property type="match status" value="1"/>
</dbReference>
<dbReference type="HAMAP" id="MF_00488">
    <property type="entry name" value="Lactate_dehydrog"/>
    <property type="match status" value="1"/>
</dbReference>
<dbReference type="InterPro" id="IPR001557">
    <property type="entry name" value="L-lactate/malate_DH"/>
</dbReference>
<dbReference type="InterPro" id="IPR011304">
    <property type="entry name" value="L-lactate_DH"/>
</dbReference>
<dbReference type="InterPro" id="IPR018177">
    <property type="entry name" value="L-lactate_DH_AS"/>
</dbReference>
<dbReference type="InterPro" id="IPR022383">
    <property type="entry name" value="Lactate/malate_DH_C"/>
</dbReference>
<dbReference type="InterPro" id="IPR001236">
    <property type="entry name" value="Lactate/malate_DH_N"/>
</dbReference>
<dbReference type="InterPro" id="IPR015955">
    <property type="entry name" value="Lactate_DH/Glyco_Ohase_4_C"/>
</dbReference>
<dbReference type="InterPro" id="IPR036291">
    <property type="entry name" value="NAD(P)-bd_dom_sf"/>
</dbReference>
<dbReference type="NCBIfam" id="TIGR01771">
    <property type="entry name" value="L-LDH-NAD"/>
    <property type="match status" value="1"/>
</dbReference>
<dbReference type="NCBIfam" id="NF000824">
    <property type="entry name" value="PRK00066.1"/>
    <property type="match status" value="1"/>
</dbReference>
<dbReference type="PANTHER" id="PTHR43128">
    <property type="entry name" value="L-2-HYDROXYCARBOXYLATE DEHYDROGENASE (NAD(P)(+))"/>
    <property type="match status" value="1"/>
</dbReference>
<dbReference type="PANTHER" id="PTHR43128:SF16">
    <property type="entry name" value="L-LACTATE DEHYDROGENASE"/>
    <property type="match status" value="1"/>
</dbReference>
<dbReference type="Pfam" id="PF02866">
    <property type="entry name" value="Ldh_1_C"/>
    <property type="match status" value="1"/>
</dbReference>
<dbReference type="Pfam" id="PF00056">
    <property type="entry name" value="Ldh_1_N"/>
    <property type="match status" value="1"/>
</dbReference>
<dbReference type="PIRSF" id="PIRSF000102">
    <property type="entry name" value="Lac_mal_DH"/>
    <property type="match status" value="1"/>
</dbReference>
<dbReference type="PRINTS" id="PR00086">
    <property type="entry name" value="LLDHDRGNASE"/>
</dbReference>
<dbReference type="SUPFAM" id="SSF56327">
    <property type="entry name" value="LDH C-terminal domain-like"/>
    <property type="match status" value="1"/>
</dbReference>
<dbReference type="SUPFAM" id="SSF51735">
    <property type="entry name" value="NAD(P)-binding Rossmann-fold domains"/>
    <property type="match status" value="1"/>
</dbReference>
<dbReference type="PROSITE" id="PS00064">
    <property type="entry name" value="L_LDH"/>
    <property type="match status" value="1"/>
</dbReference>
<proteinExistence type="evidence at protein level"/>
<evidence type="ECO:0000255" key="1">
    <source>
        <dbReference type="HAMAP-Rule" id="MF_00488"/>
    </source>
</evidence>
<evidence type="ECO:0000269" key="2">
    <source>
    </source>
</evidence>
<evidence type="ECO:0000303" key="3">
    <source>
    </source>
</evidence>
<evidence type="ECO:0000312" key="4">
    <source>
        <dbReference type="EMBL" id="CAA50278.1"/>
    </source>
</evidence>
<comment type="function">
    <text evidence="1">Catalyzes the conversion of lactate to pyruvate.</text>
</comment>
<comment type="catalytic activity">
    <reaction evidence="1 2">
        <text>(S)-lactate + NAD(+) = pyruvate + NADH + H(+)</text>
        <dbReference type="Rhea" id="RHEA:23444"/>
        <dbReference type="ChEBI" id="CHEBI:15361"/>
        <dbReference type="ChEBI" id="CHEBI:15378"/>
        <dbReference type="ChEBI" id="CHEBI:16651"/>
        <dbReference type="ChEBI" id="CHEBI:57540"/>
        <dbReference type="ChEBI" id="CHEBI:57945"/>
        <dbReference type="EC" id="1.1.1.27"/>
    </reaction>
</comment>
<comment type="pathway">
    <text evidence="1">Fermentation; pyruvate fermentation to lactate; (S)-lactate from pyruvate: step 1/1.</text>
</comment>
<comment type="subunit">
    <text evidence="1">Homotetramer.</text>
</comment>
<comment type="subcellular location">
    <subcellularLocation>
        <location evidence="1">Cytoplasm</location>
    </subcellularLocation>
</comment>
<comment type="similarity">
    <text evidence="1">Belongs to the LDH/MDH superfamily. LDH family.</text>
</comment>
<protein>
    <recommendedName>
        <fullName evidence="1">L-lactate dehydrogenase</fullName>
        <shortName evidence="1 3">L-LDH</shortName>
        <ecNumber evidence="1 2">1.1.1.27</ecNumber>
    </recommendedName>
</protein>
<gene>
    <name evidence="1" type="primary">ldh</name>
    <name evidence="4" type="synonym">l-ldh</name>
    <name evidence="3" type="synonym">ldhL</name>
</gene>
<sequence length="323" mass="34574">MSNIQNHQKVVLVGDGAVGSSYAFAMAEEGIAEEFVIVDVVKVRTVGDALDLEDATPFTAPKNIYSGEYSDCKDADLVVITAGAPQKPGETRLDLVNKNLNILSTILKPVVDSGFDGIFLVAANPVDILTYATWKFSGFPKEKVIGSGISLDTARLRVALGKKFNVSPESVDAYILGEHGDSEFAAYSSATIGTKPLLEIAKEEGVSTDELAEIEDSVRNKAYEIINKKGATFYGVGTALMRISKAILRDENAVLPVGAYMDGEYGLNDIYIGTPAVINGQGLNRVIEAPLSDDEKKKMTDSATTLKKVLTDGLNALAEKQDK</sequence>
<name>LDH_PEDAC</name>
<feature type="chain" id="PRO_0000168377" description="L-lactate dehydrogenase">
    <location>
        <begin position="1"/>
        <end position="323"/>
    </location>
</feature>
<feature type="active site" description="Proton acceptor" evidence="1">
    <location>
        <position position="179"/>
    </location>
</feature>
<feature type="binding site" evidence="1">
    <location>
        <position position="18"/>
    </location>
    <ligand>
        <name>NAD(+)</name>
        <dbReference type="ChEBI" id="CHEBI:57540"/>
    </ligand>
</feature>
<feature type="binding site" evidence="1">
    <location>
        <position position="39"/>
    </location>
    <ligand>
        <name>NAD(+)</name>
        <dbReference type="ChEBI" id="CHEBI:57540"/>
    </ligand>
</feature>
<feature type="binding site" evidence="1">
    <location>
        <position position="44"/>
    </location>
    <ligand>
        <name>NAD(+)</name>
        <dbReference type="ChEBI" id="CHEBI:57540"/>
    </ligand>
</feature>
<feature type="binding site" evidence="1">
    <location>
        <position position="69"/>
    </location>
    <ligand>
        <name>NAD(+)</name>
        <dbReference type="ChEBI" id="CHEBI:57540"/>
    </ligand>
</feature>
<feature type="binding site" evidence="1">
    <location>
        <begin position="83"/>
        <end position="84"/>
    </location>
    <ligand>
        <name>NAD(+)</name>
        <dbReference type="ChEBI" id="CHEBI:57540"/>
    </ligand>
</feature>
<feature type="binding site" evidence="1">
    <location>
        <position position="86"/>
    </location>
    <ligand>
        <name>substrate</name>
    </ligand>
</feature>
<feature type="binding site" evidence="1">
    <location>
        <position position="92"/>
    </location>
    <ligand>
        <name>substrate</name>
    </ligand>
</feature>
<feature type="binding site" evidence="1">
    <location>
        <position position="105"/>
    </location>
    <ligand>
        <name>NAD(+)</name>
        <dbReference type="ChEBI" id="CHEBI:57540"/>
    </ligand>
</feature>
<feature type="binding site" evidence="1">
    <location>
        <begin position="122"/>
        <end position="124"/>
    </location>
    <ligand>
        <name>NAD(+)</name>
        <dbReference type="ChEBI" id="CHEBI:57540"/>
    </ligand>
</feature>
<feature type="binding site" evidence="1">
    <location>
        <begin position="124"/>
        <end position="127"/>
    </location>
    <ligand>
        <name>substrate</name>
    </ligand>
</feature>
<feature type="binding site" evidence="1">
    <location>
        <position position="147"/>
    </location>
    <ligand>
        <name>NAD(+)</name>
        <dbReference type="ChEBI" id="CHEBI:57540"/>
    </ligand>
</feature>
<feature type="binding site" evidence="1">
    <location>
        <begin position="152"/>
        <end position="155"/>
    </location>
    <ligand>
        <name>substrate</name>
    </ligand>
</feature>
<feature type="binding site" evidence="1">
    <location>
        <position position="232"/>
    </location>
    <ligand>
        <name>substrate</name>
    </ligand>
</feature>
<feature type="modified residue" description="Phosphotyrosine" evidence="1">
    <location>
        <position position="223"/>
    </location>
</feature>
<accession>Q59645</accession>
<organism>
    <name type="scientific">Pediococcus acidilactici</name>
    <dbReference type="NCBI Taxonomy" id="1254"/>
    <lineage>
        <taxon>Bacteria</taxon>
        <taxon>Bacillati</taxon>
        <taxon>Bacillota</taxon>
        <taxon>Bacilli</taxon>
        <taxon>Lactobacillales</taxon>
        <taxon>Lactobacillaceae</taxon>
        <taxon>Pediococcus</taxon>
        <taxon>Pediococcus acidilactici group</taxon>
    </lineage>
</organism>
<reference key="1">
    <citation type="journal article" date="1995" name="Appl. Environ. Microbiol.">
        <title>Cloning, nucleotide sequence, and transcriptional analysis of the Pediococcus acidilactici L-(+)-lactate dehydrogenase gene.</title>
        <authorList>
            <person name="Garmyn D."/>
            <person name="Ferain T."/>
            <person name="Bernard N."/>
            <person name="Hols P."/>
            <person name="Delcour J."/>
        </authorList>
    </citation>
    <scope>NUCLEOTIDE SEQUENCE [GENOMIC DNA]</scope>
    <scope>CATALYTIC ACTIVITY</scope>
    <source>
        <strain>DG302</strain>
    </source>
</reference>